<name>CCD22_XENLA</name>
<gene>
    <name type="primary">ccdc22</name>
</gene>
<comment type="function">
    <text evidence="1">May be involved in regulation of NF-kappa-B signaling. May be involved in copper-dependent atp7a trafficking between the trans-Golgi network and vesicles in the cell periphery (By similarity).</text>
</comment>
<comment type="subcellular location">
    <subcellularLocation>
        <location evidence="1">Endosome</location>
    </subcellularLocation>
    <subcellularLocation>
        <location evidence="1">Cytoplasm</location>
        <location evidence="1">Cytoskeleton</location>
        <location evidence="1">Microtubule organizing center</location>
        <location evidence="1">Centrosome</location>
    </subcellularLocation>
</comment>
<comment type="similarity">
    <text evidence="3">Belongs to the CCDC22 family.</text>
</comment>
<evidence type="ECO:0000250" key="1">
    <source>
        <dbReference type="UniProtKB" id="O60826"/>
    </source>
</evidence>
<evidence type="ECO:0000255" key="2"/>
<evidence type="ECO:0000305" key="3"/>
<reference key="1">
    <citation type="submission" date="2003-10" db="EMBL/GenBank/DDBJ databases">
        <authorList>
            <consortium name="NIH - Xenopus Gene Collection (XGC) project"/>
        </authorList>
    </citation>
    <scope>NUCLEOTIDE SEQUENCE [LARGE SCALE MRNA]</scope>
    <source>
        <tissue>Spleen</tissue>
    </source>
</reference>
<protein>
    <recommendedName>
        <fullName>Coiled-coil domain-containing protein 22</fullName>
    </recommendedName>
</protein>
<accession>Q6PA15</accession>
<sequence length="632" mass="72251">MEEVDRILIHSLRSCGTEVPEDIQSIRQFNTELIVEAVVRCLRVINPSLGATLSHVLPPGMSAQFRIGTSLAQACQDLGYSSEVGYQTFLYSSEPDIRALLIFLAEKLPRDSSEDAHQPAGKSALLQREIVATIKQQLSLPWLPLSCRIAALRRSQSSCRLHRFHSQPLSLASDPALKSIPNERKEYWQRYLPSVTSQLPHLPSVAASLLERNTSKLSAVQEWEAEWKSQGLASRLSPEDYRSKKQQRLQKRIQEQLRQCAQLLAENHLPSSSSQDLTDMLRAFNLDGGSDQKKGSRFTRTQRFTYQQDPHTLKEQMQRAAEILPKKDAQDADAEQQEISSLQEQIDSIEQEIRGLSESNKLLQLTIGQVEGEVNDMHQSCEEKANVVRVKKRAVELLPDADNNLDKLQTLVDASAQRMANLIGQWESHQARLSDEYMELNRVQQEQEDESSRWMKDAKDLYEKIQGSADEAKRKEELYKQLLSEYESLPKEVSRAAYTQRILEIVSNIKKQKEEITKILSDTKELQKEINNLTGKVDRTFVVTDELVFKDAKKDEPVRKAYKYLAALHENCSQLIQTIEDTGTILREIRDLEEQIETETTKKTLSNLQKILEDYRAIKQENAQLLARTREA</sequence>
<organism>
    <name type="scientific">Xenopus laevis</name>
    <name type="common">African clawed frog</name>
    <dbReference type="NCBI Taxonomy" id="8355"/>
    <lineage>
        <taxon>Eukaryota</taxon>
        <taxon>Metazoa</taxon>
        <taxon>Chordata</taxon>
        <taxon>Craniata</taxon>
        <taxon>Vertebrata</taxon>
        <taxon>Euteleostomi</taxon>
        <taxon>Amphibia</taxon>
        <taxon>Batrachia</taxon>
        <taxon>Anura</taxon>
        <taxon>Pipoidea</taxon>
        <taxon>Pipidae</taxon>
        <taxon>Xenopodinae</taxon>
        <taxon>Xenopus</taxon>
        <taxon>Xenopus</taxon>
    </lineage>
</organism>
<dbReference type="EMBL" id="BC060491">
    <property type="protein sequence ID" value="AAH60491.1"/>
    <property type="molecule type" value="mRNA"/>
</dbReference>
<dbReference type="RefSeq" id="NP_001083358.1">
    <property type="nucleotide sequence ID" value="NM_001089889.1"/>
</dbReference>
<dbReference type="SMR" id="Q6PA15"/>
<dbReference type="DNASU" id="398883"/>
<dbReference type="GeneID" id="398883"/>
<dbReference type="KEGG" id="xla:398883"/>
<dbReference type="AGR" id="Xenbase:XB-GENE-979502"/>
<dbReference type="CTD" id="398883"/>
<dbReference type="Xenbase" id="XB-GENE-979502">
    <property type="gene designation" value="ccdc22.S"/>
</dbReference>
<dbReference type="OrthoDB" id="10266736at2759"/>
<dbReference type="Proteomes" id="UP000186698">
    <property type="component" value="Chromosome 8S"/>
</dbReference>
<dbReference type="Bgee" id="398883">
    <property type="expression patterns" value="Expressed in testis and 19 other cell types or tissues"/>
</dbReference>
<dbReference type="GO" id="GO:0005813">
    <property type="term" value="C:centrosome"/>
    <property type="evidence" value="ECO:0000250"/>
    <property type="project" value="UniProtKB"/>
</dbReference>
<dbReference type="GO" id="GO:0005768">
    <property type="term" value="C:endosome"/>
    <property type="evidence" value="ECO:0007669"/>
    <property type="project" value="UniProtKB-SubCell"/>
</dbReference>
<dbReference type="GO" id="GO:0097602">
    <property type="term" value="F:cullin family protein binding"/>
    <property type="evidence" value="ECO:0000318"/>
    <property type="project" value="GO_Central"/>
</dbReference>
<dbReference type="GO" id="GO:2000060">
    <property type="term" value="P:positive regulation of ubiquitin-dependent protein catabolic process"/>
    <property type="evidence" value="ECO:0000318"/>
    <property type="project" value="GO_Central"/>
</dbReference>
<dbReference type="GO" id="GO:0015031">
    <property type="term" value="P:protein transport"/>
    <property type="evidence" value="ECO:0007669"/>
    <property type="project" value="UniProtKB-KW"/>
</dbReference>
<dbReference type="InterPro" id="IPR008530">
    <property type="entry name" value="CCDC22"/>
</dbReference>
<dbReference type="InterPro" id="IPR048348">
    <property type="entry name" value="CCDC22_CC"/>
</dbReference>
<dbReference type="InterPro" id="IPR048349">
    <property type="entry name" value="CCDC22_N"/>
</dbReference>
<dbReference type="PANTHER" id="PTHR15668:SF4">
    <property type="entry name" value="COILED-COIL DOMAIN-CONTAINING PROTEIN 22"/>
    <property type="match status" value="1"/>
</dbReference>
<dbReference type="PANTHER" id="PTHR15668">
    <property type="entry name" value="JM1 PROTEIN"/>
    <property type="match status" value="1"/>
</dbReference>
<dbReference type="Pfam" id="PF05667">
    <property type="entry name" value="CCDC22_CC"/>
    <property type="match status" value="1"/>
</dbReference>
<dbReference type="Pfam" id="PF21674">
    <property type="entry name" value="CCDC22_N"/>
    <property type="match status" value="1"/>
</dbReference>
<feature type="chain" id="PRO_0000338401" description="Coiled-coil domain-containing protein 22">
    <location>
        <begin position="1"/>
        <end position="632"/>
    </location>
</feature>
<feature type="coiled-coil region" evidence="2">
    <location>
        <begin position="243"/>
        <end position="269"/>
    </location>
</feature>
<feature type="coiled-coil region" evidence="2">
    <location>
        <begin position="326"/>
        <end position="367"/>
    </location>
</feature>
<feature type="coiled-coil region" evidence="2">
    <location>
        <begin position="400"/>
        <end position="540"/>
    </location>
</feature>
<feature type="coiled-coil region" evidence="2">
    <location>
        <begin position="584"/>
        <end position="628"/>
    </location>
</feature>
<proteinExistence type="evidence at transcript level"/>
<keyword id="KW-0175">Coiled coil</keyword>
<keyword id="KW-0963">Cytoplasm</keyword>
<keyword id="KW-0206">Cytoskeleton</keyword>
<keyword id="KW-0967">Endosome</keyword>
<keyword id="KW-0653">Protein transport</keyword>
<keyword id="KW-1185">Reference proteome</keyword>
<keyword id="KW-0813">Transport</keyword>
<keyword id="KW-0833">Ubl conjugation pathway</keyword>